<name>CHED_PSEFS</name>
<accession>C3K1P8</accession>
<evidence type="ECO:0000255" key="1">
    <source>
        <dbReference type="HAMAP-Rule" id="MF_01440"/>
    </source>
</evidence>
<feature type="chain" id="PRO_1000215286" description="Probable chemoreceptor glutamine deamidase CheD">
    <location>
        <begin position="1"/>
        <end position="177"/>
    </location>
</feature>
<organism>
    <name type="scientific">Pseudomonas fluorescens (strain SBW25)</name>
    <dbReference type="NCBI Taxonomy" id="216595"/>
    <lineage>
        <taxon>Bacteria</taxon>
        <taxon>Pseudomonadati</taxon>
        <taxon>Pseudomonadota</taxon>
        <taxon>Gammaproteobacteria</taxon>
        <taxon>Pseudomonadales</taxon>
        <taxon>Pseudomonadaceae</taxon>
        <taxon>Pseudomonas</taxon>
    </lineage>
</organism>
<dbReference type="EC" id="3.5.1.44" evidence="1"/>
<dbReference type="EMBL" id="AM181176">
    <property type="protein sequence ID" value="CAY52100.1"/>
    <property type="molecule type" value="Genomic_DNA"/>
</dbReference>
<dbReference type="RefSeq" id="WP_015885767.1">
    <property type="nucleotide sequence ID" value="NC_012660.1"/>
</dbReference>
<dbReference type="SMR" id="C3K1P8"/>
<dbReference type="GeneID" id="93466710"/>
<dbReference type="eggNOG" id="COG1871">
    <property type="taxonomic scope" value="Bacteria"/>
</dbReference>
<dbReference type="HOGENOM" id="CLU_087854_1_1_6"/>
<dbReference type="OrthoDB" id="9807202at2"/>
<dbReference type="GO" id="GO:0050568">
    <property type="term" value="F:protein-glutamine glutaminase activity"/>
    <property type="evidence" value="ECO:0007669"/>
    <property type="project" value="UniProtKB-UniRule"/>
</dbReference>
<dbReference type="GO" id="GO:0006935">
    <property type="term" value="P:chemotaxis"/>
    <property type="evidence" value="ECO:0007669"/>
    <property type="project" value="UniProtKB-UniRule"/>
</dbReference>
<dbReference type="CDD" id="cd16352">
    <property type="entry name" value="CheD"/>
    <property type="match status" value="1"/>
</dbReference>
<dbReference type="Gene3D" id="3.30.1330.200">
    <property type="match status" value="1"/>
</dbReference>
<dbReference type="HAMAP" id="MF_01440">
    <property type="entry name" value="CheD"/>
    <property type="match status" value="1"/>
</dbReference>
<dbReference type="InterPro" id="IPR038592">
    <property type="entry name" value="CheD-like_sf"/>
</dbReference>
<dbReference type="InterPro" id="IPR005659">
    <property type="entry name" value="Chemorcpt_Glu_NH3ase_CheD"/>
</dbReference>
<dbReference type="InterPro" id="IPR011324">
    <property type="entry name" value="Cytotoxic_necrot_fac-like_cat"/>
</dbReference>
<dbReference type="NCBIfam" id="NF010020">
    <property type="entry name" value="PRK13498.1"/>
    <property type="match status" value="1"/>
</dbReference>
<dbReference type="PANTHER" id="PTHR35147:SF3">
    <property type="entry name" value="CHEMORECEPTOR GLUTAMINE DEAMIDASE CHED 1-RELATED"/>
    <property type="match status" value="1"/>
</dbReference>
<dbReference type="PANTHER" id="PTHR35147">
    <property type="entry name" value="CHEMORECEPTOR GLUTAMINE DEAMIDASE CHED-RELATED"/>
    <property type="match status" value="1"/>
</dbReference>
<dbReference type="Pfam" id="PF03975">
    <property type="entry name" value="CheD"/>
    <property type="match status" value="1"/>
</dbReference>
<dbReference type="SUPFAM" id="SSF64438">
    <property type="entry name" value="CNF1/YfiH-like putative cysteine hydrolases"/>
    <property type="match status" value="1"/>
</dbReference>
<proteinExistence type="inferred from homology"/>
<protein>
    <recommendedName>
        <fullName evidence="1">Probable chemoreceptor glutamine deamidase CheD</fullName>
        <ecNumber evidence="1">3.5.1.44</ecNumber>
    </recommendedName>
</protein>
<reference key="1">
    <citation type="journal article" date="2009" name="Genome Biol.">
        <title>Genomic and genetic analyses of diversity and plant interactions of Pseudomonas fluorescens.</title>
        <authorList>
            <person name="Silby M.W."/>
            <person name="Cerdeno-Tarraga A.M."/>
            <person name="Vernikos G.S."/>
            <person name="Giddens S.R."/>
            <person name="Jackson R.W."/>
            <person name="Preston G.M."/>
            <person name="Zhang X.-X."/>
            <person name="Moon C.D."/>
            <person name="Gehrig S.M."/>
            <person name="Godfrey S.A.C."/>
            <person name="Knight C.G."/>
            <person name="Malone J.G."/>
            <person name="Robinson Z."/>
            <person name="Spiers A.J."/>
            <person name="Harris S."/>
            <person name="Challis G.L."/>
            <person name="Yaxley A.M."/>
            <person name="Harris D."/>
            <person name="Seeger K."/>
            <person name="Murphy L."/>
            <person name="Rutter S."/>
            <person name="Squares R."/>
            <person name="Quail M.A."/>
            <person name="Saunders E."/>
            <person name="Mavromatis K."/>
            <person name="Brettin T.S."/>
            <person name="Bentley S.D."/>
            <person name="Hothersall J."/>
            <person name="Stephens E."/>
            <person name="Thomas C.M."/>
            <person name="Parkhill J."/>
            <person name="Levy S.B."/>
            <person name="Rainey P.B."/>
            <person name="Thomson N.R."/>
        </authorList>
    </citation>
    <scope>NUCLEOTIDE SEQUENCE [LARGE SCALE GENOMIC DNA]</scope>
    <source>
        <strain>SBW25</strain>
    </source>
</reference>
<comment type="function">
    <text evidence="1">Probably deamidates glutamine residues to glutamate on methyl-accepting chemotaxis receptors (MCPs), playing an important role in chemotaxis.</text>
</comment>
<comment type="catalytic activity">
    <reaction evidence="1">
        <text>L-glutaminyl-[protein] + H2O = L-glutamyl-[protein] + NH4(+)</text>
        <dbReference type="Rhea" id="RHEA:16441"/>
        <dbReference type="Rhea" id="RHEA-COMP:10207"/>
        <dbReference type="Rhea" id="RHEA-COMP:10208"/>
        <dbReference type="ChEBI" id="CHEBI:15377"/>
        <dbReference type="ChEBI" id="CHEBI:28938"/>
        <dbReference type="ChEBI" id="CHEBI:29973"/>
        <dbReference type="ChEBI" id="CHEBI:30011"/>
        <dbReference type="EC" id="3.5.1.44"/>
    </reaction>
</comment>
<comment type="similarity">
    <text evidence="1">Belongs to the CheD family.</text>
</comment>
<keyword id="KW-0145">Chemotaxis</keyword>
<keyword id="KW-0378">Hydrolase</keyword>
<sequence>MKKPVGTTEVILAPGQVSFATRPTRLRTLLGSCVAITFWHPQRLIGGMCHFMLPGRLRKHQPLDGRYADEALELLLRHAQVNGTHARDYQVKLFGGGEMFPDLHRRLPTQDVASLNIRAALALAERYHLHLTAQDMGSTGYRTIMFDLWNGNVWVRHQPMGLLQEDAYQKNQCAGGR</sequence>
<gene>
    <name evidence="1" type="primary">cheD</name>
    <name type="ordered locus">PFLU_5089</name>
</gene>